<geneLocation type="chloroplast"/>
<name>RK22_CAPBU</name>
<gene>
    <name type="primary">rpl22</name>
</gene>
<feature type="chain" id="PRO_0000354560" description="Large ribosomal subunit protein uL22c">
    <location>
        <begin position="1"/>
        <end position="160"/>
    </location>
</feature>
<reference key="1">
    <citation type="submission" date="2007-03" db="EMBL/GenBank/DDBJ databases">
        <title>Sequencing analysis of Capsella bursa-pastoris JO22 chloroplast DNA.</title>
        <authorList>
            <person name="Hosouchi T."/>
            <person name="Tsuruoka H."/>
            <person name="Kotani H."/>
        </authorList>
    </citation>
    <scope>NUCLEOTIDE SEQUENCE [LARGE SCALE GENOMIC DNA]</scope>
</reference>
<sequence length="160" mass="18537">MIKKRKKKSYTEVYALGQYISMSAHKARRVIDQIRGRSYEEALMILELMPYRGCYPIFKLVYSAAANASHNKGFKETNLVISKAEVNQGNTVKKLKPRARGRSYPIKRSTCHITIVLEDISFYQQNEEYLMYLKKPGCSNENRNLTCYDTYSSGGLWDKK</sequence>
<dbReference type="EMBL" id="AP009371">
    <property type="protein sequence ID" value="BAF50236.1"/>
    <property type="molecule type" value="Genomic_DNA"/>
</dbReference>
<dbReference type="RefSeq" id="YP_001123412.1">
    <property type="nucleotide sequence ID" value="NC_009270.1"/>
</dbReference>
<dbReference type="SMR" id="A4QKN1"/>
<dbReference type="GeneID" id="4961727"/>
<dbReference type="GO" id="GO:0009507">
    <property type="term" value="C:chloroplast"/>
    <property type="evidence" value="ECO:0007669"/>
    <property type="project" value="UniProtKB-SubCell"/>
</dbReference>
<dbReference type="GO" id="GO:0015934">
    <property type="term" value="C:large ribosomal subunit"/>
    <property type="evidence" value="ECO:0007669"/>
    <property type="project" value="InterPro"/>
</dbReference>
<dbReference type="GO" id="GO:0019843">
    <property type="term" value="F:rRNA binding"/>
    <property type="evidence" value="ECO:0007669"/>
    <property type="project" value="UniProtKB-UniRule"/>
</dbReference>
<dbReference type="GO" id="GO:0003735">
    <property type="term" value="F:structural constituent of ribosome"/>
    <property type="evidence" value="ECO:0007669"/>
    <property type="project" value="InterPro"/>
</dbReference>
<dbReference type="GO" id="GO:0006412">
    <property type="term" value="P:translation"/>
    <property type="evidence" value="ECO:0007669"/>
    <property type="project" value="UniProtKB-UniRule"/>
</dbReference>
<dbReference type="CDD" id="cd00336">
    <property type="entry name" value="Ribosomal_L22"/>
    <property type="match status" value="1"/>
</dbReference>
<dbReference type="FunFam" id="3.90.470.10:FF:000006">
    <property type="entry name" value="50S ribosomal protein L22, chloroplastic"/>
    <property type="match status" value="1"/>
</dbReference>
<dbReference type="Gene3D" id="3.90.470.10">
    <property type="entry name" value="Ribosomal protein L22/L17"/>
    <property type="match status" value="1"/>
</dbReference>
<dbReference type="HAMAP" id="MF_01331_B">
    <property type="entry name" value="Ribosomal_uL22_B"/>
    <property type="match status" value="1"/>
</dbReference>
<dbReference type="InterPro" id="IPR001063">
    <property type="entry name" value="Ribosomal_uL22"/>
</dbReference>
<dbReference type="InterPro" id="IPR005727">
    <property type="entry name" value="Ribosomal_uL22_bac/chlpt-type"/>
</dbReference>
<dbReference type="InterPro" id="IPR047867">
    <property type="entry name" value="Ribosomal_uL22_bac/org-type"/>
</dbReference>
<dbReference type="InterPro" id="IPR018260">
    <property type="entry name" value="Ribosomal_uL22_CS"/>
</dbReference>
<dbReference type="InterPro" id="IPR036394">
    <property type="entry name" value="Ribosomal_uL22_sf"/>
</dbReference>
<dbReference type="NCBIfam" id="TIGR01044">
    <property type="entry name" value="rplV_bact"/>
    <property type="match status" value="1"/>
</dbReference>
<dbReference type="PANTHER" id="PTHR13501">
    <property type="entry name" value="CHLOROPLAST 50S RIBOSOMAL PROTEIN L22-RELATED"/>
    <property type="match status" value="1"/>
</dbReference>
<dbReference type="PANTHER" id="PTHR13501:SF10">
    <property type="entry name" value="LARGE RIBOSOMAL SUBUNIT PROTEIN UL22M"/>
    <property type="match status" value="1"/>
</dbReference>
<dbReference type="Pfam" id="PF00237">
    <property type="entry name" value="Ribosomal_L22"/>
    <property type="match status" value="1"/>
</dbReference>
<dbReference type="SUPFAM" id="SSF54843">
    <property type="entry name" value="Ribosomal protein L22"/>
    <property type="match status" value="1"/>
</dbReference>
<dbReference type="PROSITE" id="PS00464">
    <property type="entry name" value="RIBOSOMAL_L22"/>
    <property type="match status" value="1"/>
</dbReference>
<evidence type="ECO:0000250" key="1"/>
<evidence type="ECO:0000305" key="2"/>
<protein>
    <recommendedName>
        <fullName evidence="2">Large ribosomal subunit protein uL22c</fullName>
    </recommendedName>
    <alternativeName>
        <fullName>50S ribosomal protein L22, chloroplastic</fullName>
    </alternativeName>
</protein>
<organism>
    <name type="scientific">Capsella bursa-pastoris</name>
    <name type="common">Shepherd's purse</name>
    <name type="synonym">Thlaspi bursa-pastoris</name>
    <dbReference type="NCBI Taxonomy" id="3719"/>
    <lineage>
        <taxon>Eukaryota</taxon>
        <taxon>Viridiplantae</taxon>
        <taxon>Streptophyta</taxon>
        <taxon>Embryophyta</taxon>
        <taxon>Tracheophyta</taxon>
        <taxon>Spermatophyta</taxon>
        <taxon>Magnoliopsida</taxon>
        <taxon>eudicotyledons</taxon>
        <taxon>Gunneridae</taxon>
        <taxon>Pentapetalae</taxon>
        <taxon>rosids</taxon>
        <taxon>malvids</taxon>
        <taxon>Brassicales</taxon>
        <taxon>Brassicaceae</taxon>
        <taxon>Camelineae</taxon>
        <taxon>Capsella</taxon>
    </lineage>
</organism>
<accession>A4QKN1</accession>
<comment type="function">
    <text evidence="1">This protein binds specifically to 23S rRNA.</text>
</comment>
<comment type="function">
    <text evidence="1">The globular domain of the protein is located near the polypeptide exit tunnel on the outside of the subunit, while an extended beta-hairpin is found that lines the wall of the exit tunnel in the center of the 70S ribosome.</text>
</comment>
<comment type="subunit">
    <text evidence="1">Part of the 50S ribosomal subunit.</text>
</comment>
<comment type="subcellular location">
    <subcellularLocation>
        <location>Plastid</location>
        <location>Chloroplast</location>
    </subcellularLocation>
</comment>
<comment type="similarity">
    <text evidence="2">Belongs to the universal ribosomal protein uL22 family.</text>
</comment>
<proteinExistence type="inferred from homology"/>
<keyword id="KW-0150">Chloroplast</keyword>
<keyword id="KW-0934">Plastid</keyword>
<keyword id="KW-0687">Ribonucleoprotein</keyword>
<keyword id="KW-0689">Ribosomal protein</keyword>
<keyword id="KW-0694">RNA-binding</keyword>
<keyword id="KW-0699">rRNA-binding</keyword>